<protein>
    <recommendedName>
        <fullName>Interferon gamma</fullName>
        <shortName>IFN-gamma</shortName>
    </recommendedName>
</protein>
<dbReference type="EMBL" id="Y14138">
    <property type="protein sequence ID" value="CAA74570.1"/>
    <property type="molecule type" value="mRNA"/>
</dbReference>
<dbReference type="EMBL" id="AF081502">
    <property type="protein sequence ID" value="AAC31963.1"/>
    <property type="molecule type" value="mRNA"/>
</dbReference>
<dbReference type="EMBL" id="AF232728">
    <property type="protein sequence ID" value="AAF68960.1"/>
    <property type="molecule type" value="mRNA"/>
</dbReference>
<dbReference type="EMBL" id="AY253722">
    <property type="protein sequence ID" value="AAP80574.1"/>
    <property type="molecule type" value="mRNA"/>
</dbReference>
<dbReference type="SMR" id="O35735"/>
<dbReference type="GlyCosmos" id="O35735">
    <property type="glycosylation" value="3 sites, No reported glycans"/>
</dbReference>
<dbReference type="GO" id="GO:0005615">
    <property type="term" value="C:extracellular space"/>
    <property type="evidence" value="ECO:0007669"/>
    <property type="project" value="UniProtKB-KW"/>
</dbReference>
<dbReference type="GO" id="GO:0005125">
    <property type="term" value="F:cytokine activity"/>
    <property type="evidence" value="ECO:0007669"/>
    <property type="project" value="UniProtKB-KW"/>
</dbReference>
<dbReference type="GO" id="GO:0005133">
    <property type="term" value="F:type II interferon receptor binding"/>
    <property type="evidence" value="ECO:0007669"/>
    <property type="project" value="InterPro"/>
</dbReference>
<dbReference type="GO" id="GO:0002250">
    <property type="term" value="P:adaptive immune response"/>
    <property type="evidence" value="ECO:0007669"/>
    <property type="project" value="TreeGrafter"/>
</dbReference>
<dbReference type="GO" id="GO:0051607">
    <property type="term" value="P:defense response to virus"/>
    <property type="evidence" value="ECO:0007669"/>
    <property type="project" value="UniProtKB-KW"/>
</dbReference>
<dbReference type="GO" id="GO:0006959">
    <property type="term" value="P:humoral immune response"/>
    <property type="evidence" value="ECO:0007669"/>
    <property type="project" value="TreeGrafter"/>
</dbReference>
<dbReference type="GO" id="GO:0010508">
    <property type="term" value="P:positive regulation of autophagy"/>
    <property type="evidence" value="ECO:0000250"/>
    <property type="project" value="UniProtKB"/>
</dbReference>
<dbReference type="FunFam" id="1.20.1250.10:FF:000007">
    <property type="entry name" value="Interferon gamma"/>
    <property type="match status" value="1"/>
</dbReference>
<dbReference type="Gene3D" id="1.20.1250.10">
    <property type="match status" value="1"/>
</dbReference>
<dbReference type="InterPro" id="IPR009079">
    <property type="entry name" value="4_helix_cytokine-like_core"/>
</dbReference>
<dbReference type="InterPro" id="IPR002069">
    <property type="entry name" value="Interferon_gamma"/>
</dbReference>
<dbReference type="PANTHER" id="PTHR11419">
    <property type="entry name" value="INTERFERON GAMMA"/>
    <property type="match status" value="1"/>
</dbReference>
<dbReference type="PANTHER" id="PTHR11419:SF0">
    <property type="entry name" value="INTERFERON GAMMA"/>
    <property type="match status" value="1"/>
</dbReference>
<dbReference type="Pfam" id="PF00714">
    <property type="entry name" value="IFN-gamma"/>
    <property type="match status" value="1"/>
</dbReference>
<dbReference type="PIRSF" id="PIRSF001936">
    <property type="entry name" value="IFN-gamma"/>
    <property type="match status" value="1"/>
</dbReference>
<dbReference type="SUPFAM" id="SSF47266">
    <property type="entry name" value="4-helical cytokines"/>
    <property type="match status" value="1"/>
</dbReference>
<accession>O35735</accession>
<accession>O88641</accession>
<accession>Q6X659</accession>
<comment type="function">
    <text>Produced by lymphocytes activated by specific antigens or mitogens. IFN-gamma, in addition to having antiviral activity, has important immunoregulatory functions. It is a potent activator of macrophages, it has antiproliferative effects on transformed cells and it can potentiate the antiviral and antitumor effects of the type I interferons.</text>
</comment>
<comment type="subunit">
    <text evidence="1">Homodimer.</text>
</comment>
<comment type="subcellular location">
    <subcellularLocation>
        <location>Secreted</location>
    </subcellularLocation>
</comment>
<comment type="tissue specificity">
    <text>Released primarily from activated T lymphocytes.</text>
</comment>
<comment type="similarity">
    <text evidence="4">Belongs to the type II (or gamma) interferon family.</text>
</comment>
<proteinExistence type="evidence at transcript level"/>
<name>IFNG_MARMO</name>
<keyword id="KW-0051">Antiviral defense</keyword>
<keyword id="KW-0202">Cytokine</keyword>
<keyword id="KW-0325">Glycoprotein</keyword>
<keyword id="KW-0341">Growth regulation</keyword>
<keyword id="KW-0873">Pyrrolidone carboxylic acid</keyword>
<keyword id="KW-0964">Secreted</keyword>
<keyword id="KW-0732">Signal</keyword>
<organism>
    <name type="scientific">Marmota monax</name>
    <name type="common">Woodchuck</name>
    <dbReference type="NCBI Taxonomy" id="9995"/>
    <lineage>
        <taxon>Eukaryota</taxon>
        <taxon>Metazoa</taxon>
        <taxon>Chordata</taxon>
        <taxon>Craniata</taxon>
        <taxon>Vertebrata</taxon>
        <taxon>Euteleostomi</taxon>
        <taxon>Mammalia</taxon>
        <taxon>Eutheria</taxon>
        <taxon>Euarchontoglires</taxon>
        <taxon>Glires</taxon>
        <taxon>Rodentia</taxon>
        <taxon>Sciuromorpha</taxon>
        <taxon>Sciuridae</taxon>
        <taxon>Xerinae</taxon>
        <taxon>Marmotini</taxon>
        <taxon>Marmota</taxon>
    </lineage>
</organism>
<feature type="signal peptide" evidence="1">
    <location>
        <begin position="1"/>
        <end position="23"/>
    </location>
</feature>
<feature type="chain" id="PRO_0000016450" description="Interferon gamma">
    <location>
        <begin position="24"/>
        <end position="166"/>
    </location>
</feature>
<feature type="modified residue" description="Pyrrolidone carboxylic acid" evidence="2">
    <location>
        <position position="24"/>
    </location>
</feature>
<feature type="glycosylation site" description="N-linked (GlcNAc...) asparagine" evidence="3">
    <location>
        <position position="39"/>
    </location>
</feature>
<feature type="glycosylation site" description="N-linked (GlcNAc...) asparagine" evidence="3">
    <location>
        <position position="44"/>
    </location>
</feature>
<feature type="glycosylation site" description="N-linked (GlcNAc...) asparagine" evidence="3">
    <location>
        <position position="106"/>
    </location>
</feature>
<feature type="sequence conflict" description="In Ref. 2; AAC31963 and 3; AAF68960." evidence="4" ref="2 3">
    <original>I</original>
    <variation>F</variation>
    <location>
        <position position="7"/>
    </location>
</feature>
<feature type="sequence conflict" description="In Ref. 4; AAP80574." evidence="4" ref="4">
    <original>L</original>
    <variation>F</variation>
    <location>
        <position position="12"/>
    </location>
</feature>
<feature type="sequence conflict" description="In Ref. 1; CAA74570." evidence="4" ref="1">
    <original>I</original>
    <variation>V</variation>
    <location>
        <position position="72"/>
    </location>
</feature>
<feature type="sequence conflict" description="In Ref. 1; CAA74570." evidence="4" ref="1">
    <original>I</original>
    <variation>N</variation>
    <location>
        <position position="88"/>
    </location>
</feature>
<gene>
    <name type="primary">IFNG</name>
</gene>
<sequence>MKYTSYILAFQLCIILGSSSCYSQDTVNKEIEDLKGYFNASNSNVSDGGSLFLDILDKWKEESDKKVIQSQIVSFYFKLFEHLKDNKIIQRSMDTIKGDLFAKFFNSSTNKLQDFLKVSQVQVNDLKIQRKAVSELKKVMNDLLPHSTLRKRKRSQSSIRGRRASK</sequence>
<evidence type="ECO:0000250" key="1"/>
<evidence type="ECO:0000250" key="2">
    <source>
        <dbReference type="UniProtKB" id="P01579"/>
    </source>
</evidence>
<evidence type="ECO:0000255" key="3"/>
<evidence type="ECO:0000305" key="4"/>
<reference key="1">
    <citation type="journal article" date="1998" name="Immunogenetics">
        <title>Molecular cloning of the woodchuck cytokines: TNF-alpha, IFN-gamma, and IL-6.</title>
        <authorList>
            <person name="Lohrengel B."/>
            <person name="Lu M."/>
            <person name="Roggendorf M."/>
        </authorList>
    </citation>
    <scope>NUCLEOTIDE SEQUENCE [MRNA]</scope>
    <source>
        <tissue>Peripheral blood</tissue>
    </source>
</reference>
<reference key="2">
    <citation type="journal article" date="2000" name="J. Virol.">
        <title>Apoptosis and regeneration of hepatocytes during recovery from transient hepadnavirus infections.</title>
        <authorList>
            <person name="Guo J.T."/>
            <person name="Zhou H."/>
            <person name="Liu C."/>
            <person name="Aldrich C."/>
            <person name="Saputelli J."/>
            <person name="Whitaker T."/>
            <person name="Barrasa M.I."/>
            <person name="Mason W.S."/>
            <person name="Seeger C."/>
        </authorList>
    </citation>
    <scope>NUCLEOTIDE SEQUENCE [MRNA]</scope>
</reference>
<reference key="3">
    <citation type="journal article" date="2000" name="J. Virol.">
        <title>Posttranscriptional inhibition of class I major histocompatibility complex presentation on hepatocytes and lymphoid cells in chronic woodchuck hepatitis virus infection.</title>
        <authorList>
            <person name="Michalak T.I."/>
            <person name="Hodgson P.D."/>
            <person name="Churchill N.D."/>
        </authorList>
    </citation>
    <scope>NUCLEOTIDE SEQUENCE [MRNA]</scope>
</reference>
<reference key="4">
    <citation type="submission" date="2003-03" db="EMBL/GenBank/DDBJ databases">
        <title>Role of interferon-gamma-related response in woodchuck hepatitis virus infection and viral clearance from hepatocytes.</title>
        <authorList>
            <person name="Wang Y."/>
            <person name="Jacob J.R."/>
            <person name="Menne S."/>
            <person name="Bellezza C.A."/>
            <person name="Tennant B.C."/>
            <person name="Gerin J.L."/>
            <person name="Cote P.J."/>
        </authorList>
    </citation>
    <scope>NUCLEOTIDE SEQUENCE [MRNA]</scope>
</reference>